<gene>
    <name type="primary">corA</name>
    <name type="ordered locus">SDY_3929</name>
</gene>
<sequence length="316" mass="36590">MLSAFQLENNRLTRLEVEESQPLVNAVWIDLVEPDDDERLRVQSELGQSLATRPELEDIEASARFFEDDDGLHIHSFFFFEDAEDHAGNSTVAFTIRDGRLFTLRERELPAFRLYRMRARSQSMVDGNAYELLLDLFETKIEQLADEIENIYSDLEQLSRVIMEGHQGDEYDEALSTLAELEDIGWKVRLCLMDTQRALNFLVRKARLPGGQLEQAREILRDIESLLPHNESLFQKVNFLMQAAMGFINIEQNRIIKIFSVVSVVFLPPTLVASSYGMNFEFMPELKWSFGYPGAIIFMILAGLAPYLYFKRKNWL</sequence>
<name>CORA_SHIDS</name>
<proteinExistence type="inferred from homology"/>
<keyword id="KW-0997">Cell inner membrane</keyword>
<keyword id="KW-1003">Cell membrane</keyword>
<keyword id="KW-0406">Ion transport</keyword>
<keyword id="KW-0460">Magnesium</keyword>
<keyword id="KW-0472">Membrane</keyword>
<keyword id="KW-1185">Reference proteome</keyword>
<keyword id="KW-0812">Transmembrane</keyword>
<keyword id="KW-1133">Transmembrane helix</keyword>
<keyword id="KW-0813">Transport</keyword>
<organism>
    <name type="scientific">Shigella dysenteriae serotype 1 (strain Sd197)</name>
    <dbReference type="NCBI Taxonomy" id="300267"/>
    <lineage>
        <taxon>Bacteria</taxon>
        <taxon>Pseudomonadati</taxon>
        <taxon>Pseudomonadota</taxon>
        <taxon>Gammaproteobacteria</taxon>
        <taxon>Enterobacterales</taxon>
        <taxon>Enterobacteriaceae</taxon>
        <taxon>Shigella</taxon>
    </lineage>
</organism>
<evidence type="ECO:0000250" key="1">
    <source>
        <dbReference type="UniProtKB" id="P0ABI4"/>
    </source>
</evidence>
<evidence type="ECO:0000250" key="2">
    <source>
        <dbReference type="UniProtKB" id="Q9WZ31"/>
    </source>
</evidence>
<evidence type="ECO:0000255" key="3"/>
<evidence type="ECO:0000305" key="4"/>
<accession>Q329Z2</accession>
<dbReference type="EMBL" id="CP000034">
    <property type="protein sequence ID" value="ABB63863.1"/>
    <property type="molecule type" value="Genomic_DNA"/>
</dbReference>
<dbReference type="RefSeq" id="WP_000947159.1">
    <property type="nucleotide sequence ID" value="NC_007606.1"/>
</dbReference>
<dbReference type="RefSeq" id="YP_405354.1">
    <property type="nucleotide sequence ID" value="NC_007606.1"/>
</dbReference>
<dbReference type="SMR" id="Q329Z2"/>
<dbReference type="STRING" id="300267.SDY_3929"/>
<dbReference type="EnsemblBacteria" id="ABB63863">
    <property type="protein sequence ID" value="ABB63863"/>
    <property type="gene ID" value="SDY_3929"/>
</dbReference>
<dbReference type="GeneID" id="93778125"/>
<dbReference type="KEGG" id="sdy:SDY_3929"/>
<dbReference type="PATRIC" id="fig|300267.13.peg.4639"/>
<dbReference type="HOGENOM" id="CLU_007127_5_0_6"/>
<dbReference type="Proteomes" id="UP000002716">
    <property type="component" value="Chromosome"/>
</dbReference>
<dbReference type="GO" id="GO:0005886">
    <property type="term" value="C:plasma membrane"/>
    <property type="evidence" value="ECO:0007669"/>
    <property type="project" value="UniProtKB-SubCell"/>
</dbReference>
<dbReference type="GO" id="GO:0015087">
    <property type="term" value="F:cobalt ion transmembrane transporter activity"/>
    <property type="evidence" value="ECO:0007669"/>
    <property type="project" value="InterPro"/>
</dbReference>
<dbReference type="GO" id="GO:0015095">
    <property type="term" value="F:magnesium ion transmembrane transporter activity"/>
    <property type="evidence" value="ECO:0007669"/>
    <property type="project" value="InterPro"/>
</dbReference>
<dbReference type="GO" id="GO:0015099">
    <property type="term" value="F:nickel cation transmembrane transporter activity"/>
    <property type="evidence" value="ECO:0007669"/>
    <property type="project" value="TreeGrafter"/>
</dbReference>
<dbReference type="CDD" id="cd12835">
    <property type="entry name" value="EcCorA-like_1"/>
    <property type="match status" value="1"/>
</dbReference>
<dbReference type="FunFam" id="1.20.58.340:FF:000001">
    <property type="entry name" value="Magnesium transport protein CorA"/>
    <property type="match status" value="1"/>
</dbReference>
<dbReference type="Gene3D" id="1.20.58.340">
    <property type="entry name" value="Magnesium transport protein CorA, transmembrane region"/>
    <property type="match status" value="1"/>
</dbReference>
<dbReference type="InterPro" id="IPR045861">
    <property type="entry name" value="CorA_cytoplasmic_dom"/>
</dbReference>
<dbReference type="InterPro" id="IPR050829">
    <property type="entry name" value="CorA_MIT"/>
</dbReference>
<dbReference type="InterPro" id="IPR045863">
    <property type="entry name" value="CorA_TM1_TM2"/>
</dbReference>
<dbReference type="InterPro" id="IPR004488">
    <property type="entry name" value="Mg/Co-transport_prot_CorA"/>
</dbReference>
<dbReference type="InterPro" id="IPR002523">
    <property type="entry name" value="MgTranspt_CorA/ZnTranspt_ZntB"/>
</dbReference>
<dbReference type="NCBIfam" id="TIGR00383">
    <property type="entry name" value="corA"/>
    <property type="match status" value="1"/>
</dbReference>
<dbReference type="PANTHER" id="PTHR47685">
    <property type="entry name" value="MAGNESIUM TRANSPORT PROTEIN CORA"/>
    <property type="match status" value="1"/>
</dbReference>
<dbReference type="PANTHER" id="PTHR47685:SF1">
    <property type="entry name" value="MAGNESIUM TRANSPORT PROTEIN CORA"/>
    <property type="match status" value="1"/>
</dbReference>
<dbReference type="Pfam" id="PF01544">
    <property type="entry name" value="CorA"/>
    <property type="match status" value="1"/>
</dbReference>
<dbReference type="SUPFAM" id="SSF143865">
    <property type="entry name" value="CorA soluble domain-like"/>
    <property type="match status" value="1"/>
</dbReference>
<dbReference type="SUPFAM" id="SSF144083">
    <property type="entry name" value="Magnesium transport protein CorA, transmembrane region"/>
    <property type="match status" value="1"/>
</dbReference>
<comment type="function">
    <text evidence="1 2">Mediates influx of magnesium ions (By similarity). Alternates between open and closed states. Activated by low cytoplasmic Mg(2+) levels. Inactive when cytoplasmic Mg(2+) levels are high (By similarity).</text>
</comment>
<comment type="catalytic activity">
    <reaction evidence="1">
        <text>Mg(2+)(in) = Mg(2+)(out)</text>
        <dbReference type="Rhea" id="RHEA:29827"/>
        <dbReference type="ChEBI" id="CHEBI:18420"/>
    </reaction>
</comment>
<comment type="subunit">
    <text evidence="2">Homopentamer. In the absence of Mg(2+), interactions between subunits are weakened, and dimers, trimers and tetramers can be observed in vitro (By similarity).</text>
</comment>
<comment type="subcellular location">
    <subcellularLocation>
        <location evidence="1">Cell inner membrane</location>
        <topology evidence="2">Multi-pass membrane protein</topology>
    </subcellularLocation>
</comment>
<comment type="domain">
    <text evidence="2">The central ion permeation pathway is formed by the first transmembrane domain from each of the five subunits. Mg(2+) binding strengthens interactions between subunits and leads to the formation of a symmetrical homopentamer surrounding a closed ion permeation pathway. Low Mg(2+) concentrations trigger both a conformation change within each subunit and a loosening of the interactions between subunits. This results in an open ion conduction pathway. In addition, this results in a less symmetrical shape of the whole complex.</text>
</comment>
<comment type="similarity">
    <text evidence="4">Belongs to the CorA metal ion transporter (MIT) (TC 1.A.35) family.</text>
</comment>
<reference key="1">
    <citation type="journal article" date="2005" name="Nucleic Acids Res.">
        <title>Genome dynamics and diversity of Shigella species, the etiologic agents of bacillary dysentery.</title>
        <authorList>
            <person name="Yang F."/>
            <person name="Yang J."/>
            <person name="Zhang X."/>
            <person name="Chen L."/>
            <person name="Jiang Y."/>
            <person name="Yan Y."/>
            <person name="Tang X."/>
            <person name="Wang J."/>
            <person name="Xiong Z."/>
            <person name="Dong J."/>
            <person name="Xue Y."/>
            <person name="Zhu Y."/>
            <person name="Xu X."/>
            <person name="Sun L."/>
            <person name="Chen S."/>
            <person name="Nie H."/>
            <person name="Peng J."/>
            <person name="Xu J."/>
            <person name="Wang Y."/>
            <person name="Yuan Z."/>
            <person name="Wen Y."/>
            <person name="Yao Z."/>
            <person name="Shen Y."/>
            <person name="Qiang B."/>
            <person name="Hou Y."/>
            <person name="Yu J."/>
            <person name="Jin Q."/>
        </authorList>
    </citation>
    <scope>NUCLEOTIDE SEQUENCE [LARGE SCALE GENOMIC DNA]</scope>
    <source>
        <strain>Sd197</strain>
    </source>
</reference>
<feature type="chain" id="PRO_0000239104" description="Magnesium transport protein CorA">
    <location>
        <begin position="1"/>
        <end position="316"/>
    </location>
</feature>
<feature type="transmembrane region" description="Helical" evidence="3">
    <location>
        <begin position="258"/>
        <end position="278"/>
    </location>
</feature>
<feature type="transmembrane region" description="Helical" evidence="3">
    <location>
        <begin position="290"/>
        <end position="310"/>
    </location>
</feature>
<feature type="short sequence motif" description="Probable selectivity filter" evidence="2">
    <location>
        <begin position="277"/>
        <end position="279"/>
    </location>
</feature>
<feature type="site" description="Essential for ion permeation" evidence="2">
    <location>
        <position position="253"/>
    </location>
</feature>
<protein>
    <recommendedName>
        <fullName>Magnesium transport protein CorA</fullName>
    </recommendedName>
</protein>